<reference evidence="6" key="1">
    <citation type="journal article" date="2007" name="Nature">
        <title>Evolution of genes and genomes on the Drosophila phylogeny.</title>
        <authorList>
            <consortium name="Drosophila 12 genomes consortium"/>
        </authorList>
    </citation>
    <scope>NUCLEOTIDE SEQUENCE [LARGE SCALE GENOMIC DNA]</scope>
    <source>
        <strain evidence="6">Tai18E2 / Tucson 14021-0261.01</strain>
    </source>
</reference>
<keyword id="KW-1003">Cell membrane</keyword>
<keyword id="KW-0140">cGMP</keyword>
<keyword id="KW-0378">Hydrolase</keyword>
<keyword id="KW-0449">Lipoprotein</keyword>
<keyword id="KW-0472">Membrane</keyword>
<keyword id="KW-0479">Metal-binding</keyword>
<keyword id="KW-0488">Methylation</keyword>
<keyword id="KW-0636">Prenylation</keyword>
<keyword id="KW-0677">Repeat</keyword>
<evidence type="ECO:0000250" key="1"/>
<evidence type="ECO:0000250" key="2">
    <source>
        <dbReference type="UniProtKB" id="Q9VFI9"/>
    </source>
</evidence>
<evidence type="ECO:0000255" key="3"/>
<evidence type="ECO:0000255" key="4">
    <source>
        <dbReference type="PROSITE-ProRule" id="PRU01192"/>
    </source>
</evidence>
<evidence type="ECO:0000256" key="5">
    <source>
        <dbReference type="SAM" id="MobiDB-lite"/>
    </source>
</evidence>
<evidence type="ECO:0000312" key="6">
    <source>
        <dbReference type="EMBL" id="EDW97571.1"/>
    </source>
</evidence>
<protein>
    <recommendedName>
        <fullName evidence="2">cGMP-specific 3',5'-cyclic phosphodiesterase</fullName>
        <ecNumber>3.1.4.35</ecNumber>
    </recommendedName>
</protein>
<gene>
    <name evidence="2" type="primary">Pde6</name>
    <name type="ORF">GE26445</name>
</gene>
<feature type="chain" id="PRO_0000363704" description="cGMP-specific 3',5'-cyclic phosphodiesterase">
    <location>
        <begin position="1"/>
        <end position="1146"/>
    </location>
</feature>
<feature type="propeptide" id="PRO_0000363705" description="Removed in mature form" evidence="2">
    <location>
        <begin position="1147"/>
        <end position="1149"/>
    </location>
</feature>
<feature type="domain" description="GAF 1" evidence="3">
    <location>
        <begin position="278"/>
        <end position="430"/>
    </location>
</feature>
<feature type="domain" description="GAF 2" evidence="3">
    <location>
        <begin position="462"/>
        <end position="643"/>
    </location>
</feature>
<feature type="domain" description="PDEase" evidence="4">
    <location>
        <begin position="673"/>
        <end position="996"/>
    </location>
</feature>
<feature type="region of interest" description="Disordered" evidence="5">
    <location>
        <begin position="1"/>
        <end position="175"/>
    </location>
</feature>
<feature type="region of interest" description="Disordered" evidence="5">
    <location>
        <begin position="1037"/>
        <end position="1066"/>
    </location>
</feature>
<feature type="region of interest" description="Disordered" evidence="5">
    <location>
        <begin position="1096"/>
        <end position="1149"/>
    </location>
</feature>
<feature type="compositionally biased region" description="Low complexity" evidence="5">
    <location>
        <begin position="1"/>
        <end position="19"/>
    </location>
</feature>
<feature type="compositionally biased region" description="Low complexity" evidence="5">
    <location>
        <begin position="31"/>
        <end position="47"/>
    </location>
</feature>
<feature type="compositionally biased region" description="Polar residues" evidence="5">
    <location>
        <begin position="48"/>
        <end position="59"/>
    </location>
</feature>
<feature type="compositionally biased region" description="Low complexity" evidence="5">
    <location>
        <begin position="60"/>
        <end position="85"/>
    </location>
</feature>
<feature type="compositionally biased region" description="Polar residues" evidence="5">
    <location>
        <begin position="96"/>
        <end position="108"/>
    </location>
</feature>
<feature type="compositionally biased region" description="Low complexity" evidence="5">
    <location>
        <begin position="132"/>
        <end position="158"/>
    </location>
</feature>
<feature type="compositionally biased region" description="Basic and acidic residues" evidence="5">
    <location>
        <begin position="1042"/>
        <end position="1053"/>
    </location>
</feature>
<feature type="compositionally biased region" description="Basic and acidic residues" evidence="5">
    <location>
        <begin position="1096"/>
        <end position="1106"/>
    </location>
</feature>
<feature type="compositionally biased region" description="Low complexity" evidence="5">
    <location>
        <begin position="1115"/>
        <end position="1135"/>
    </location>
</feature>
<feature type="compositionally biased region" description="Basic residues" evidence="5">
    <location>
        <begin position="1139"/>
        <end position="1149"/>
    </location>
</feature>
<feature type="active site" description="Proton donor" evidence="1">
    <location>
        <position position="749"/>
    </location>
</feature>
<feature type="binding site" evidence="1">
    <location>
        <position position="753"/>
    </location>
    <ligand>
        <name>a divalent metal cation</name>
        <dbReference type="ChEBI" id="CHEBI:60240"/>
        <label>1</label>
    </ligand>
</feature>
<feature type="binding site" evidence="1">
    <location>
        <position position="789"/>
    </location>
    <ligand>
        <name>a divalent metal cation</name>
        <dbReference type="ChEBI" id="CHEBI:60240"/>
        <label>1</label>
    </ligand>
</feature>
<feature type="binding site" evidence="1">
    <location>
        <position position="790"/>
    </location>
    <ligand>
        <name>a divalent metal cation</name>
        <dbReference type="ChEBI" id="CHEBI:60240"/>
        <label>1</label>
    </ligand>
</feature>
<feature type="binding site" evidence="1">
    <location>
        <position position="790"/>
    </location>
    <ligand>
        <name>a divalent metal cation</name>
        <dbReference type="ChEBI" id="CHEBI:60240"/>
        <label>2</label>
    </ligand>
</feature>
<feature type="binding site" evidence="1">
    <location>
        <position position="900"/>
    </location>
    <ligand>
        <name>a divalent metal cation</name>
        <dbReference type="ChEBI" id="CHEBI:60240"/>
        <label>1</label>
    </ligand>
</feature>
<feature type="modified residue" description="Cysteine methyl ester" evidence="2">
    <location>
        <position position="1146"/>
    </location>
</feature>
<feature type="lipid moiety-binding region" description="S-farnesyl cysteine" evidence="2">
    <location>
        <position position="1146"/>
    </location>
</feature>
<name>PDE6_DROYA</name>
<comment type="function">
    <text evidence="2">Has a role regulating cGMP transport in Malpighian tubule principal cells.</text>
</comment>
<comment type="catalytic activity">
    <reaction evidence="2">
        <text>3',5'-cyclic GMP + H2O = GMP + H(+)</text>
        <dbReference type="Rhea" id="RHEA:16957"/>
        <dbReference type="ChEBI" id="CHEBI:15377"/>
        <dbReference type="ChEBI" id="CHEBI:15378"/>
        <dbReference type="ChEBI" id="CHEBI:57746"/>
        <dbReference type="ChEBI" id="CHEBI:58115"/>
        <dbReference type="EC" id="3.1.4.35"/>
    </reaction>
</comment>
<comment type="cofactor">
    <cofactor evidence="1">
        <name>a divalent metal cation</name>
        <dbReference type="ChEBI" id="CHEBI:60240"/>
    </cofactor>
    <text evidence="1">Binds 2 divalent metal cations per subunit. Site 1 may preferentially bind zinc ions, while site 2 has a preference for magnesium and/or manganese ions.</text>
</comment>
<comment type="subunit">
    <text evidence="2">Interacts with PrBP.</text>
</comment>
<comment type="subcellular location">
    <subcellularLocation>
        <location evidence="2">Cell membrane</location>
        <topology evidence="2">Lipid-anchor</topology>
        <orientation evidence="2">Cytoplasmic side</orientation>
    </subcellularLocation>
</comment>
<comment type="similarity">
    <text evidence="3">Belongs to the cyclic nucleotide phosphodiesterase family.</text>
</comment>
<organism>
    <name type="scientific">Drosophila yakuba</name>
    <name type="common">Fruit fly</name>
    <dbReference type="NCBI Taxonomy" id="7245"/>
    <lineage>
        <taxon>Eukaryota</taxon>
        <taxon>Metazoa</taxon>
        <taxon>Ecdysozoa</taxon>
        <taxon>Arthropoda</taxon>
        <taxon>Hexapoda</taxon>
        <taxon>Insecta</taxon>
        <taxon>Pterygota</taxon>
        <taxon>Neoptera</taxon>
        <taxon>Endopterygota</taxon>
        <taxon>Diptera</taxon>
        <taxon>Brachycera</taxon>
        <taxon>Muscomorpha</taxon>
        <taxon>Ephydroidea</taxon>
        <taxon>Drosophilidae</taxon>
        <taxon>Drosophila</taxon>
        <taxon>Sophophora</taxon>
    </lineage>
</organism>
<proteinExistence type="inferred from homology"/>
<dbReference type="EC" id="3.1.4.35"/>
<dbReference type="EMBL" id="CM000160">
    <property type="protein sequence ID" value="EDW97571.1"/>
    <property type="molecule type" value="Genomic_DNA"/>
</dbReference>
<dbReference type="SMR" id="B4PSS5"/>
<dbReference type="EnsemblMetazoa" id="FBtr0272963">
    <property type="protein sequence ID" value="FBpp0271455"/>
    <property type="gene ID" value="FBgn0243466"/>
</dbReference>
<dbReference type="EnsemblMetazoa" id="XM_002097823.4">
    <property type="protein sequence ID" value="XP_002097859.1"/>
    <property type="gene ID" value="LOC6537301"/>
</dbReference>
<dbReference type="GeneID" id="6537301"/>
<dbReference type="KEGG" id="dya:Dyak_GE26445"/>
<dbReference type="eggNOG" id="KOG3689">
    <property type="taxonomic scope" value="Eukaryota"/>
</dbReference>
<dbReference type="HOGENOM" id="CLU_006980_0_2_1"/>
<dbReference type="OMA" id="FHIPYEV"/>
<dbReference type="OrthoDB" id="74705at2759"/>
<dbReference type="PhylomeDB" id="B4PSS5"/>
<dbReference type="ChiTaRS" id="Pde6">
    <property type="organism name" value="fly"/>
</dbReference>
<dbReference type="Proteomes" id="UP000002282">
    <property type="component" value="Chromosome 3R"/>
</dbReference>
<dbReference type="GO" id="GO:0016020">
    <property type="term" value="C:membrane"/>
    <property type="evidence" value="ECO:0000250"/>
    <property type="project" value="UniProtKB"/>
</dbReference>
<dbReference type="GO" id="GO:0005886">
    <property type="term" value="C:plasma membrane"/>
    <property type="evidence" value="ECO:0007669"/>
    <property type="project" value="UniProtKB-SubCell"/>
</dbReference>
<dbReference type="GO" id="GO:0047555">
    <property type="term" value="F:3',5'-cyclic-GMP phosphodiesterase activity"/>
    <property type="evidence" value="ECO:0000250"/>
    <property type="project" value="UniProtKB"/>
</dbReference>
<dbReference type="GO" id="GO:0046872">
    <property type="term" value="F:metal ion binding"/>
    <property type="evidence" value="ECO:0007669"/>
    <property type="project" value="UniProtKB-KW"/>
</dbReference>
<dbReference type="GO" id="GO:0046068">
    <property type="term" value="P:cGMP metabolic process"/>
    <property type="evidence" value="ECO:0000250"/>
    <property type="project" value="UniProtKB"/>
</dbReference>
<dbReference type="GO" id="GO:0007165">
    <property type="term" value="P:signal transduction"/>
    <property type="evidence" value="ECO:0007669"/>
    <property type="project" value="InterPro"/>
</dbReference>
<dbReference type="CDD" id="cd00077">
    <property type="entry name" value="HDc"/>
    <property type="match status" value="1"/>
</dbReference>
<dbReference type="FunFam" id="1.10.1300.10:FF:000003">
    <property type="entry name" value="Phosphodiesterase"/>
    <property type="match status" value="1"/>
</dbReference>
<dbReference type="FunFam" id="3.30.450.40:FF:000031">
    <property type="entry name" value="Phosphodiesterase"/>
    <property type="match status" value="1"/>
</dbReference>
<dbReference type="Gene3D" id="3.30.450.40">
    <property type="match status" value="2"/>
</dbReference>
<dbReference type="Gene3D" id="1.10.1300.10">
    <property type="entry name" value="3'5'-cyclic nucleotide phosphodiesterase, catalytic domain"/>
    <property type="match status" value="1"/>
</dbReference>
<dbReference type="InterPro" id="IPR003018">
    <property type="entry name" value="GAF"/>
</dbReference>
<dbReference type="InterPro" id="IPR029016">
    <property type="entry name" value="GAF-like_dom_sf"/>
</dbReference>
<dbReference type="InterPro" id="IPR003607">
    <property type="entry name" value="HD/PDEase_dom"/>
</dbReference>
<dbReference type="InterPro" id="IPR023088">
    <property type="entry name" value="PDEase"/>
</dbReference>
<dbReference type="InterPro" id="IPR002073">
    <property type="entry name" value="PDEase_catalytic_dom"/>
</dbReference>
<dbReference type="InterPro" id="IPR036971">
    <property type="entry name" value="PDEase_catalytic_dom_sf"/>
</dbReference>
<dbReference type="InterPro" id="IPR023174">
    <property type="entry name" value="PDEase_CS"/>
</dbReference>
<dbReference type="PANTHER" id="PTHR11347">
    <property type="entry name" value="CYCLIC NUCLEOTIDE PHOSPHODIESTERASE"/>
    <property type="match status" value="1"/>
</dbReference>
<dbReference type="Pfam" id="PF01590">
    <property type="entry name" value="GAF"/>
    <property type="match status" value="2"/>
</dbReference>
<dbReference type="Pfam" id="PF00233">
    <property type="entry name" value="PDEase_I"/>
    <property type="match status" value="1"/>
</dbReference>
<dbReference type="PRINTS" id="PR00387">
    <property type="entry name" value="PDIESTERASE1"/>
</dbReference>
<dbReference type="SMART" id="SM00065">
    <property type="entry name" value="GAF"/>
    <property type="match status" value="2"/>
</dbReference>
<dbReference type="SMART" id="SM00471">
    <property type="entry name" value="HDc"/>
    <property type="match status" value="1"/>
</dbReference>
<dbReference type="SUPFAM" id="SSF55781">
    <property type="entry name" value="GAF domain-like"/>
    <property type="match status" value="2"/>
</dbReference>
<dbReference type="SUPFAM" id="SSF109604">
    <property type="entry name" value="HD-domain/PDEase-like"/>
    <property type="match status" value="1"/>
</dbReference>
<dbReference type="PROSITE" id="PS00126">
    <property type="entry name" value="PDEASE_I_1"/>
    <property type="match status" value="1"/>
</dbReference>
<dbReference type="PROSITE" id="PS51845">
    <property type="entry name" value="PDEASE_I_2"/>
    <property type="match status" value="1"/>
</dbReference>
<accession>B4PSS5</accession>
<sequence length="1149" mass="127347">MHGTVSRSSSSSNMTDVSSPAGGAASPVEIATSSSTAATTSASASSSKPLTNGANKTAISTAAGVTPGAAPGPGCAAIPASGSSGNQVKLEHHYRQSNNNRPAGSNRSSETKLRSPAGESDGASRLMTPAGSSSSPSQSPSQSQSQSQASIQTQTSQQDRLVKAPSTTASQQDVDEVARLFEEKPEAFEKWLTERAPPEALSRLQEFIENRKPHKRPSVTSDLFQQWMAASPTVQQKSPRSLSNSSASSLPECRRHLMDLDEGELFMELIRDVANELDIDVLCHKILVNVGLLTHADRGSLFLAKGTPTNKYLVAKLFDVTQKTALKDAVTRASAEEIIIPFGIGIAGMVAQTKQMINIKEAYKDARFNCEIDLKTGYKTNAILCMPICNYEGDIIGVAQIINKTNGCMEFDEHDVEIFRRYLTFCGIGIQNAQLFEMSVQEYRRNQILLNLARSIFEEQNNLECLVTKIMTEARELLKCERCSVFLVDLDCCEASHLEKIIEKPNQPATRAIKSADSFEEKKMRNRFTVLFELGGEYQAANVSRPSVSELSSSTLAQIAQFVATTGQTVNICDVIEWVRDHNQIRAEDEIDSTQAILCMPIMNAQKKVIGVAQLINKANGVPFTESDASIFEAFAIFCGLGIHNTQMYENACKLMAKQKVALECLSYHATASQDQTEKLTQDAIAEAESYNLYSFTFTDFELVDDDTCRAVLRMFMQCNLVSQFQIPYDVLCRWVLSVRKNYRPVKYHNWRHALNVAQTMFAMLKTGKMERFMTDLEILGLLVACLCHDLDHRGTNNAFQTKTESPLAILYTTSTMEHHHFDQCVMILNSEGNNIFQALSPEDYRSVMKTVESAILSTDLAMYFKKRNAFLELVENGEFDWQGEEKKDLLCGMMMTACDVSAIAKPWEVQHKVAKLVADEFFDQGDLEKLQLNTQPVAMMDRERKDELPKMQVGFIDVICLPLYRVLCDTFPWITPLYEGTLENRRNWQDLAEKVEMGLTWIDHDTIDKPVEEFAACADEEIKDIEFTVTTLNCNQQSQHGSEDSHTPEHQRSGSRLSMKKTGALGKAVRSKLSKTLYNSMDGSKPKTSLKLLESHVSEDMDDKSPTSPSQPQASGSMGRMSASSSTSSAGGQMVDKSKKRSKLCALL</sequence>